<keyword id="KW-0143">Chaperone</keyword>
<keyword id="KW-0963">Cytoplasm</keyword>
<keyword id="KW-0996">Nickel insertion</keyword>
<keyword id="KW-1185">Reference proteome</keyword>
<name>URED_VEREI</name>
<evidence type="ECO:0000255" key="1">
    <source>
        <dbReference type="HAMAP-Rule" id="MF_01384"/>
    </source>
</evidence>
<feature type="chain" id="PRO_0000340530" description="Urease accessory protein UreD">
    <location>
        <begin position="1"/>
        <end position="276"/>
    </location>
</feature>
<reference key="1">
    <citation type="submission" date="2006-12" db="EMBL/GenBank/DDBJ databases">
        <title>Complete sequence of chromosome 1 of Verminephrobacter eiseniae EF01-2.</title>
        <authorList>
            <person name="Copeland A."/>
            <person name="Lucas S."/>
            <person name="Lapidus A."/>
            <person name="Barry K."/>
            <person name="Detter J.C."/>
            <person name="Glavina del Rio T."/>
            <person name="Dalin E."/>
            <person name="Tice H."/>
            <person name="Pitluck S."/>
            <person name="Chertkov O."/>
            <person name="Brettin T."/>
            <person name="Bruce D."/>
            <person name="Han C."/>
            <person name="Tapia R."/>
            <person name="Gilna P."/>
            <person name="Schmutz J."/>
            <person name="Larimer F."/>
            <person name="Land M."/>
            <person name="Hauser L."/>
            <person name="Kyrpides N."/>
            <person name="Kim E."/>
            <person name="Stahl D."/>
            <person name="Richardson P."/>
        </authorList>
    </citation>
    <scope>NUCLEOTIDE SEQUENCE [LARGE SCALE GENOMIC DNA]</scope>
    <source>
        <strain>EF01-2</strain>
    </source>
</reference>
<accession>A1WHP7</accession>
<dbReference type="EMBL" id="CP000542">
    <property type="protein sequence ID" value="ABM57154.1"/>
    <property type="molecule type" value="Genomic_DNA"/>
</dbReference>
<dbReference type="RefSeq" id="WP_011809163.1">
    <property type="nucleotide sequence ID" value="NC_008786.1"/>
</dbReference>
<dbReference type="SMR" id="A1WHP7"/>
<dbReference type="STRING" id="391735.Veis_1390"/>
<dbReference type="GeneID" id="76460025"/>
<dbReference type="KEGG" id="vei:Veis_1390"/>
<dbReference type="eggNOG" id="COG0829">
    <property type="taxonomic scope" value="Bacteria"/>
</dbReference>
<dbReference type="HOGENOM" id="CLU_056339_0_0_4"/>
<dbReference type="OrthoDB" id="9798842at2"/>
<dbReference type="Proteomes" id="UP000000374">
    <property type="component" value="Chromosome"/>
</dbReference>
<dbReference type="GO" id="GO:0005737">
    <property type="term" value="C:cytoplasm"/>
    <property type="evidence" value="ECO:0007669"/>
    <property type="project" value="UniProtKB-SubCell"/>
</dbReference>
<dbReference type="GO" id="GO:0016151">
    <property type="term" value="F:nickel cation binding"/>
    <property type="evidence" value="ECO:0007669"/>
    <property type="project" value="UniProtKB-UniRule"/>
</dbReference>
<dbReference type="HAMAP" id="MF_01384">
    <property type="entry name" value="UreD"/>
    <property type="match status" value="1"/>
</dbReference>
<dbReference type="InterPro" id="IPR002669">
    <property type="entry name" value="UreD"/>
</dbReference>
<dbReference type="PANTHER" id="PTHR33643">
    <property type="entry name" value="UREASE ACCESSORY PROTEIN D"/>
    <property type="match status" value="1"/>
</dbReference>
<dbReference type="PANTHER" id="PTHR33643:SF1">
    <property type="entry name" value="UREASE ACCESSORY PROTEIN D"/>
    <property type="match status" value="1"/>
</dbReference>
<dbReference type="Pfam" id="PF01774">
    <property type="entry name" value="UreD"/>
    <property type="match status" value="1"/>
</dbReference>
<comment type="function">
    <text evidence="1">Required for maturation of urease via the functional incorporation of the urease nickel metallocenter.</text>
</comment>
<comment type="subunit">
    <text evidence="1">UreD, UreF and UreG form a complex that acts as a GTP-hydrolysis-dependent molecular chaperone, activating the urease apoprotein by helping to assemble the nickel containing metallocenter of UreC. The UreE protein probably delivers the nickel.</text>
</comment>
<comment type="subcellular location">
    <subcellularLocation>
        <location evidence="1">Cytoplasm</location>
    </subcellularLocation>
</comment>
<comment type="similarity">
    <text evidence="1">Belongs to the UreD family.</text>
</comment>
<protein>
    <recommendedName>
        <fullName evidence="1">Urease accessory protein UreD</fullName>
    </recommendedName>
</protein>
<sequence>MPWHARLQLNYTREHARTVARFEHHGPLRVLQSLYPEGGGICHNVLVHPPGGLVGGDQLDIRASVGPGAHALITSAGATRFYRSMGAPVLQRTCLSLAPGARLEWLPLEALCYNACNAENRLTLTLAPGAECMGADVTALGLPHAGQPFVAGRFVQHIEIPGLWREHGVIDATDQRLLRSPLGLAGHCCMASLFFGAGSALSQARRDSALDAARAVIDAHALKTTAGATSPCDQVLVLRLLAPQVEPAMQLLRQVRAAWRAALWQLDAEPPRIWAM</sequence>
<gene>
    <name evidence="1" type="primary">ureD</name>
    <name type="ordered locus">Veis_1390</name>
</gene>
<proteinExistence type="inferred from homology"/>
<organism>
    <name type="scientific">Verminephrobacter eiseniae (strain EF01-2)</name>
    <dbReference type="NCBI Taxonomy" id="391735"/>
    <lineage>
        <taxon>Bacteria</taxon>
        <taxon>Pseudomonadati</taxon>
        <taxon>Pseudomonadota</taxon>
        <taxon>Betaproteobacteria</taxon>
        <taxon>Burkholderiales</taxon>
        <taxon>Comamonadaceae</taxon>
        <taxon>Verminephrobacter</taxon>
    </lineage>
</organism>